<proteinExistence type="inferred from homology"/>
<comment type="similarity">
    <text evidence="3">Belongs to the bacterial solute-binding protein 1 family. WtpA subfamily.</text>
</comment>
<keyword id="KW-1185">Reference proteome</keyword>
<keyword id="KW-0732">Signal</keyword>
<accession>Q96YZ5</accession>
<dbReference type="EMBL" id="BA000023">
    <property type="protein sequence ID" value="BAB67131.1"/>
    <property type="molecule type" value="Genomic_DNA"/>
</dbReference>
<dbReference type="RefSeq" id="WP_010980107.1">
    <property type="nucleotide sequence ID" value="NC_003106.2"/>
</dbReference>
<dbReference type="SMR" id="Q96YZ5"/>
<dbReference type="STRING" id="273063.STK_20340"/>
<dbReference type="GeneID" id="1460096"/>
<dbReference type="KEGG" id="sto:STK_20340"/>
<dbReference type="PATRIC" id="fig|273063.9.peg.2321"/>
<dbReference type="eggNOG" id="arCOG00219">
    <property type="taxonomic scope" value="Archaea"/>
</dbReference>
<dbReference type="OrthoDB" id="7820at2157"/>
<dbReference type="Proteomes" id="UP000001015">
    <property type="component" value="Chromosome"/>
</dbReference>
<dbReference type="GO" id="GO:0030973">
    <property type="term" value="F:molybdate ion binding"/>
    <property type="evidence" value="ECO:0007669"/>
    <property type="project" value="TreeGrafter"/>
</dbReference>
<dbReference type="GO" id="GO:0015689">
    <property type="term" value="P:molybdate ion transport"/>
    <property type="evidence" value="ECO:0007669"/>
    <property type="project" value="TreeGrafter"/>
</dbReference>
<dbReference type="CDD" id="cd13540">
    <property type="entry name" value="PBP2_ModA_WtpA"/>
    <property type="match status" value="1"/>
</dbReference>
<dbReference type="Gene3D" id="3.40.190.10">
    <property type="entry name" value="Periplasmic binding protein-like II"/>
    <property type="match status" value="2"/>
</dbReference>
<dbReference type="InterPro" id="IPR050682">
    <property type="entry name" value="ModA/WtpA"/>
</dbReference>
<dbReference type="PANTHER" id="PTHR30632">
    <property type="entry name" value="MOLYBDATE-BINDING PERIPLASMIC PROTEIN"/>
    <property type="match status" value="1"/>
</dbReference>
<dbReference type="PANTHER" id="PTHR30632:SF16">
    <property type="entry name" value="MOLYBDATE_TUNGSTATE-BINDING PROTEIN WTPA"/>
    <property type="match status" value="1"/>
</dbReference>
<dbReference type="Pfam" id="PF13531">
    <property type="entry name" value="SBP_bac_11"/>
    <property type="match status" value="1"/>
</dbReference>
<dbReference type="SUPFAM" id="SSF53850">
    <property type="entry name" value="Periplasmic binding protein-like II"/>
    <property type="match status" value="1"/>
</dbReference>
<reference key="1">
    <citation type="journal article" date="2001" name="DNA Res.">
        <title>Complete genome sequence of an aerobic thermoacidophilic Crenarchaeon, Sulfolobus tokodaii strain7.</title>
        <authorList>
            <person name="Kawarabayasi Y."/>
            <person name="Hino Y."/>
            <person name="Horikawa H."/>
            <person name="Jin-no K."/>
            <person name="Takahashi M."/>
            <person name="Sekine M."/>
            <person name="Baba S."/>
            <person name="Ankai A."/>
            <person name="Kosugi H."/>
            <person name="Hosoyama A."/>
            <person name="Fukui S."/>
            <person name="Nagai Y."/>
            <person name="Nishijima K."/>
            <person name="Otsuka R."/>
            <person name="Nakazawa H."/>
            <person name="Takamiya M."/>
            <person name="Kato Y."/>
            <person name="Yoshizawa T."/>
            <person name="Tanaka T."/>
            <person name="Kudoh Y."/>
            <person name="Yamazaki J."/>
            <person name="Kushida N."/>
            <person name="Oguchi A."/>
            <person name="Aoki K."/>
            <person name="Masuda S."/>
            <person name="Yanagii M."/>
            <person name="Nishimura M."/>
            <person name="Yamagishi A."/>
            <person name="Oshima T."/>
            <person name="Kikuchi H."/>
        </authorList>
    </citation>
    <scope>NUCLEOTIDE SEQUENCE [LARGE SCALE GENOMIC DNA]</scope>
    <source>
        <strain>DSM 16993 / JCM 10545 / NBRC 100140 / 7</strain>
    </source>
</reference>
<protein>
    <recommendedName>
        <fullName>Uncharacterized solute-binding protein STK_20340</fullName>
    </recommendedName>
</protein>
<organism>
    <name type="scientific">Sulfurisphaera tokodaii (strain DSM 16993 / JCM 10545 / NBRC 100140 / 7)</name>
    <name type="common">Sulfolobus tokodaii</name>
    <dbReference type="NCBI Taxonomy" id="273063"/>
    <lineage>
        <taxon>Archaea</taxon>
        <taxon>Thermoproteota</taxon>
        <taxon>Thermoprotei</taxon>
        <taxon>Sulfolobales</taxon>
        <taxon>Sulfolobaceae</taxon>
        <taxon>Sulfurisphaera</taxon>
    </lineage>
</organism>
<sequence>MSRHKVYKAISSYVIIAIIIIAIVAVVGVLLLTRHPSSSSVTSTTTPTTSSSVSPSSSGPVIVYVAGAYKAIFDYLAKQFEQQTGITVDVVPGGSFGLAAQIAKGQPVSVFVPVAYIQAVELEGNRDPGWAIAFISDQMAIIYSNYTTQSPYWNQLYSNYTMAMKTNESQYWYNFFYLLTTKFSLGISNPSSDPEGLYAYLILKMAGYLYANHSFDYFINLVNHNPNVVSAPTTADFVPDLATGKLDFTFSYVSYAISQHLEYLKLPPWLSFGYYPNETSWDSFFFYKITVNGQTLKIYGNPVYLYITIPVNASNEQGAIEFVEFIVDHVQELSMFGVTPITHPLLFYQNKSDVPSQILNLLNQGVLQYGGNFSAV</sequence>
<gene>
    <name type="ordered locus">STK_20340</name>
</gene>
<feature type="signal peptide" evidence="1">
    <location>
        <begin position="1"/>
        <end position="31"/>
    </location>
</feature>
<feature type="chain" id="PRO_0000159727" description="Uncharacterized solute-binding protein STK_20340">
    <location>
        <begin position="32"/>
        <end position="376"/>
    </location>
</feature>
<feature type="region of interest" description="Disordered" evidence="2">
    <location>
        <begin position="37"/>
        <end position="57"/>
    </location>
</feature>
<name>Y2034_SULTO</name>
<evidence type="ECO:0000255" key="1"/>
<evidence type="ECO:0000256" key="2">
    <source>
        <dbReference type="SAM" id="MobiDB-lite"/>
    </source>
</evidence>
<evidence type="ECO:0000305" key="3"/>